<comment type="catalytic activity">
    <reaction evidence="1">
        <text>(2R)-3-phosphoglycerate + ATP = (2R)-3-phospho-glyceroyl phosphate + ADP</text>
        <dbReference type="Rhea" id="RHEA:14801"/>
        <dbReference type="ChEBI" id="CHEBI:30616"/>
        <dbReference type="ChEBI" id="CHEBI:57604"/>
        <dbReference type="ChEBI" id="CHEBI:58272"/>
        <dbReference type="ChEBI" id="CHEBI:456216"/>
        <dbReference type="EC" id="2.7.2.3"/>
    </reaction>
</comment>
<comment type="pathway">
    <text evidence="1">Carbohydrate degradation; glycolysis; pyruvate from D-glyceraldehyde 3-phosphate: step 2/5.</text>
</comment>
<comment type="subunit">
    <text evidence="1">Monomer.</text>
</comment>
<comment type="subcellular location">
    <subcellularLocation>
        <location evidence="1">Cytoplasm</location>
    </subcellularLocation>
</comment>
<comment type="similarity">
    <text evidence="1">Belongs to the phosphoglycerate kinase family.</text>
</comment>
<feature type="chain" id="PRO_0000146044" description="Phosphoglycerate kinase">
    <location>
        <begin position="1"/>
        <end position="391"/>
    </location>
</feature>
<feature type="binding site" evidence="1">
    <location>
        <begin position="21"/>
        <end position="23"/>
    </location>
    <ligand>
        <name>substrate</name>
    </ligand>
</feature>
<feature type="binding site" evidence="1">
    <location>
        <position position="36"/>
    </location>
    <ligand>
        <name>substrate</name>
    </ligand>
</feature>
<feature type="binding site" evidence="1">
    <location>
        <begin position="59"/>
        <end position="62"/>
    </location>
    <ligand>
        <name>substrate</name>
    </ligand>
</feature>
<feature type="binding site" evidence="1">
    <location>
        <position position="113"/>
    </location>
    <ligand>
        <name>substrate</name>
    </ligand>
</feature>
<feature type="binding site" evidence="1">
    <location>
        <position position="146"/>
    </location>
    <ligand>
        <name>substrate</name>
    </ligand>
</feature>
<feature type="binding site" evidence="1">
    <location>
        <position position="197"/>
    </location>
    <ligand>
        <name>ATP</name>
        <dbReference type="ChEBI" id="CHEBI:30616"/>
    </ligand>
</feature>
<feature type="binding site" evidence="1">
    <location>
        <position position="319"/>
    </location>
    <ligand>
        <name>ATP</name>
        <dbReference type="ChEBI" id="CHEBI:30616"/>
    </ligand>
</feature>
<feature type="binding site" evidence="1">
    <location>
        <begin position="345"/>
        <end position="348"/>
    </location>
    <ligand>
        <name>ATP</name>
        <dbReference type="ChEBI" id="CHEBI:30616"/>
    </ligand>
</feature>
<name>PGK_XANAC</name>
<protein>
    <recommendedName>
        <fullName evidence="1">Phosphoglycerate kinase</fullName>
        <ecNumber evidence="1">2.7.2.3</ecNumber>
    </recommendedName>
</protein>
<evidence type="ECO:0000255" key="1">
    <source>
        <dbReference type="HAMAP-Rule" id="MF_00145"/>
    </source>
</evidence>
<proteinExistence type="inferred from homology"/>
<accession>Q8PHB2</accession>
<keyword id="KW-0067">ATP-binding</keyword>
<keyword id="KW-0963">Cytoplasm</keyword>
<keyword id="KW-0324">Glycolysis</keyword>
<keyword id="KW-0418">Kinase</keyword>
<keyword id="KW-0547">Nucleotide-binding</keyword>
<keyword id="KW-0808">Transferase</keyword>
<sequence>MSIVRMTDLDLSGKRVLIRQDLNVPIDNGQITSEQRITASVPTIKLALEKGAAVMVTSHLGRPKEGSWTEEDSLAPVATRLAALLGVDVPLVRDWVDGVEVAPGQVVLLENCRMNVGEGKDDETLARKYAALCDVFVMDAFGTAHRAQASTHGVIRFAPVAAGGPLLMAELDALAKALDNPAKPLLAIVAGSKVSTKLELLSNLVNKVDQLIVGGGIANTFIAAAGHAVGKSLNEPDLIPTANRIVADAKARGAEIPLPTDVVVAKQFLPDAQASVKSLDAVDADDLILDIGPQTAQRYAELIASAGTVVWNGPVGVFEFESFSHGTETLARAIASSKAFSIAGGGDTLAAVDKYDIAQDVTYISTGGGAFLEFLEGKTLPAVAALQARGQ</sequence>
<organism>
    <name type="scientific">Xanthomonas axonopodis pv. citri (strain 306)</name>
    <dbReference type="NCBI Taxonomy" id="190486"/>
    <lineage>
        <taxon>Bacteria</taxon>
        <taxon>Pseudomonadati</taxon>
        <taxon>Pseudomonadota</taxon>
        <taxon>Gammaproteobacteria</taxon>
        <taxon>Lysobacterales</taxon>
        <taxon>Lysobacteraceae</taxon>
        <taxon>Xanthomonas</taxon>
    </lineage>
</organism>
<gene>
    <name evidence="1" type="primary">pgk</name>
    <name type="ordered locus">XAC3347</name>
</gene>
<dbReference type="EC" id="2.7.2.3" evidence="1"/>
<dbReference type="EMBL" id="AE008923">
    <property type="protein sequence ID" value="AAM38190.1"/>
    <property type="molecule type" value="Genomic_DNA"/>
</dbReference>
<dbReference type="RefSeq" id="WP_005922388.1">
    <property type="nucleotide sequence ID" value="NC_003919.1"/>
</dbReference>
<dbReference type="SMR" id="Q8PHB2"/>
<dbReference type="KEGG" id="xac:XAC3347"/>
<dbReference type="eggNOG" id="COG0126">
    <property type="taxonomic scope" value="Bacteria"/>
</dbReference>
<dbReference type="HOGENOM" id="CLU_025427_0_2_6"/>
<dbReference type="UniPathway" id="UPA00109">
    <property type="reaction ID" value="UER00185"/>
</dbReference>
<dbReference type="Proteomes" id="UP000000576">
    <property type="component" value="Chromosome"/>
</dbReference>
<dbReference type="GO" id="GO:0005829">
    <property type="term" value="C:cytosol"/>
    <property type="evidence" value="ECO:0007669"/>
    <property type="project" value="TreeGrafter"/>
</dbReference>
<dbReference type="GO" id="GO:0043531">
    <property type="term" value="F:ADP binding"/>
    <property type="evidence" value="ECO:0007669"/>
    <property type="project" value="TreeGrafter"/>
</dbReference>
<dbReference type="GO" id="GO:0005524">
    <property type="term" value="F:ATP binding"/>
    <property type="evidence" value="ECO:0007669"/>
    <property type="project" value="UniProtKB-KW"/>
</dbReference>
<dbReference type="GO" id="GO:0004618">
    <property type="term" value="F:phosphoglycerate kinase activity"/>
    <property type="evidence" value="ECO:0007669"/>
    <property type="project" value="UniProtKB-UniRule"/>
</dbReference>
<dbReference type="GO" id="GO:0006094">
    <property type="term" value="P:gluconeogenesis"/>
    <property type="evidence" value="ECO:0007669"/>
    <property type="project" value="TreeGrafter"/>
</dbReference>
<dbReference type="GO" id="GO:0006096">
    <property type="term" value="P:glycolytic process"/>
    <property type="evidence" value="ECO:0007669"/>
    <property type="project" value="UniProtKB-UniRule"/>
</dbReference>
<dbReference type="FunFam" id="3.40.50.1260:FF:000001">
    <property type="entry name" value="Phosphoglycerate kinase"/>
    <property type="match status" value="1"/>
</dbReference>
<dbReference type="FunFam" id="3.40.50.1260:FF:000002">
    <property type="entry name" value="Phosphoglycerate kinase"/>
    <property type="match status" value="1"/>
</dbReference>
<dbReference type="Gene3D" id="3.40.50.1260">
    <property type="entry name" value="Phosphoglycerate kinase, N-terminal domain"/>
    <property type="match status" value="2"/>
</dbReference>
<dbReference type="HAMAP" id="MF_00145">
    <property type="entry name" value="Phosphoglyc_kinase"/>
    <property type="match status" value="1"/>
</dbReference>
<dbReference type="InterPro" id="IPR001576">
    <property type="entry name" value="Phosphoglycerate_kinase"/>
</dbReference>
<dbReference type="InterPro" id="IPR015911">
    <property type="entry name" value="Phosphoglycerate_kinase_CS"/>
</dbReference>
<dbReference type="InterPro" id="IPR015824">
    <property type="entry name" value="Phosphoglycerate_kinase_N"/>
</dbReference>
<dbReference type="InterPro" id="IPR036043">
    <property type="entry name" value="Phosphoglycerate_kinase_sf"/>
</dbReference>
<dbReference type="PANTHER" id="PTHR11406">
    <property type="entry name" value="PHOSPHOGLYCERATE KINASE"/>
    <property type="match status" value="1"/>
</dbReference>
<dbReference type="PANTHER" id="PTHR11406:SF23">
    <property type="entry name" value="PHOSPHOGLYCERATE KINASE 1, CHLOROPLASTIC-RELATED"/>
    <property type="match status" value="1"/>
</dbReference>
<dbReference type="Pfam" id="PF00162">
    <property type="entry name" value="PGK"/>
    <property type="match status" value="1"/>
</dbReference>
<dbReference type="PIRSF" id="PIRSF000724">
    <property type="entry name" value="Pgk"/>
    <property type="match status" value="1"/>
</dbReference>
<dbReference type="PRINTS" id="PR00477">
    <property type="entry name" value="PHGLYCKINASE"/>
</dbReference>
<dbReference type="SUPFAM" id="SSF53748">
    <property type="entry name" value="Phosphoglycerate kinase"/>
    <property type="match status" value="1"/>
</dbReference>
<dbReference type="PROSITE" id="PS00111">
    <property type="entry name" value="PGLYCERATE_KINASE"/>
    <property type="match status" value="1"/>
</dbReference>
<reference key="1">
    <citation type="journal article" date="2002" name="Nature">
        <title>Comparison of the genomes of two Xanthomonas pathogens with differing host specificities.</title>
        <authorList>
            <person name="da Silva A.C.R."/>
            <person name="Ferro J.A."/>
            <person name="Reinach F.C."/>
            <person name="Farah C.S."/>
            <person name="Furlan L.R."/>
            <person name="Quaggio R.B."/>
            <person name="Monteiro-Vitorello C.B."/>
            <person name="Van Sluys M.A."/>
            <person name="Almeida N.F. Jr."/>
            <person name="Alves L.M.C."/>
            <person name="do Amaral A.M."/>
            <person name="Bertolini M.C."/>
            <person name="Camargo L.E.A."/>
            <person name="Camarotte G."/>
            <person name="Cannavan F."/>
            <person name="Cardozo J."/>
            <person name="Chambergo F."/>
            <person name="Ciapina L.P."/>
            <person name="Cicarelli R.M.B."/>
            <person name="Coutinho L.L."/>
            <person name="Cursino-Santos J.R."/>
            <person name="El-Dorry H."/>
            <person name="Faria J.B."/>
            <person name="Ferreira A.J.S."/>
            <person name="Ferreira R.C.C."/>
            <person name="Ferro M.I.T."/>
            <person name="Formighieri E.F."/>
            <person name="Franco M.C."/>
            <person name="Greggio C.C."/>
            <person name="Gruber A."/>
            <person name="Katsuyama A.M."/>
            <person name="Kishi L.T."/>
            <person name="Leite R.P."/>
            <person name="Lemos E.G.M."/>
            <person name="Lemos M.V.F."/>
            <person name="Locali E.C."/>
            <person name="Machado M.A."/>
            <person name="Madeira A.M.B.N."/>
            <person name="Martinez-Rossi N.M."/>
            <person name="Martins E.C."/>
            <person name="Meidanis J."/>
            <person name="Menck C.F.M."/>
            <person name="Miyaki C.Y."/>
            <person name="Moon D.H."/>
            <person name="Moreira L.M."/>
            <person name="Novo M.T.M."/>
            <person name="Okura V.K."/>
            <person name="Oliveira M.C."/>
            <person name="Oliveira V.R."/>
            <person name="Pereira H.A."/>
            <person name="Rossi A."/>
            <person name="Sena J.A.D."/>
            <person name="Silva C."/>
            <person name="de Souza R.F."/>
            <person name="Spinola L.A.F."/>
            <person name="Takita M.A."/>
            <person name="Tamura R.E."/>
            <person name="Teixeira E.C."/>
            <person name="Tezza R.I.D."/>
            <person name="Trindade dos Santos M."/>
            <person name="Truffi D."/>
            <person name="Tsai S.M."/>
            <person name="White F.F."/>
            <person name="Setubal J.C."/>
            <person name="Kitajima J.P."/>
        </authorList>
    </citation>
    <scope>NUCLEOTIDE SEQUENCE [LARGE SCALE GENOMIC DNA]</scope>
    <source>
        <strain>306</strain>
    </source>
</reference>